<comment type="function">
    <text evidence="1">Part of a heterotetrameric complex that catalyzes the two-step biosynthesis of anthranilate, an intermediate in the biosynthesis of L-tryptophan. In the first step, the glutamine-binding beta subunit (TrpG) of anthranilate synthase (AS) provides the glutamine amidotransferase activity which generates ammonia as a substrate that, along with chorismate, is used in the second step, catalyzed by the large alpha subunit of AS (TrpE) to produce anthranilate. In the absence of TrpG, TrpE can synthesize anthranilate directly from chorismate and high concentrations of ammonia (By similarity).</text>
</comment>
<comment type="catalytic activity">
    <reaction>
        <text>chorismate + L-glutamine = anthranilate + pyruvate + L-glutamate + H(+)</text>
        <dbReference type="Rhea" id="RHEA:21732"/>
        <dbReference type="ChEBI" id="CHEBI:15361"/>
        <dbReference type="ChEBI" id="CHEBI:15378"/>
        <dbReference type="ChEBI" id="CHEBI:16567"/>
        <dbReference type="ChEBI" id="CHEBI:29748"/>
        <dbReference type="ChEBI" id="CHEBI:29985"/>
        <dbReference type="ChEBI" id="CHEBI:58359"/>
        <dbReference type="EC" id="4.1.3.27"/>
    </reaction>
</comment>
<comment type="cofactor">
    <cofactor evidence="2">
        <name>Mg(2+)</name>
        <dbReference type="ChEBI" id="CHEBI:18420"/>
    </cofactor>
    <text evidence="2">Binds 1 Mg(2+) ion per subunit.</text>
</comment>
<comment type="activity regulation">
    <text evidence="1">Feedback inhibited by tryptophan.</text>
</comment>
<comment type="pathway">
    <text>Amino-acid biosynthesis; L-tryptophan biosynthesis; L-tryptophan from chorismate: step 1/5.</text>
</comment>
<comment type="subunit">
    <text evidence="1">Heterotetramer consisting of two non-identical subunits: a beta subunit (TrpG) and a large alpha subunit (TrpE).</text>
</comment>
<comment type="similarity">
    <text evidence="4">Belongs to the anthranilate synthase component I family.</text>
</comment>
<keyword id="KW-0028">Amino-acid biosynthesis</keyword>
<keyword id="KW-0057">Aromatic amino acid biosynthesis</keyword>
<keyword id="KW-0456">Lyase</keyword>
<keyword id="KW-0460">Magnesium</keyword>
<keyword id="KW-0479">Metal-binding</keyword>
<keyword id="KW-1185">Reference proteome</keyword>
<keyword id="KW-0822">Tryptophan biosynthesis</keyword>
<name>TRPE_STRCO</name>
<organism>
    <name type="scientific">Streptomyces coelicolor (strain ATCC BAA-471 / A3(2) / M145)</name>
    <dbReference type="NCBI Taxonomy" id="100226"/>
    <lineage>
        <taxon>Bacteria</taxon>
        <taxon>Bacillati</taxon>
        <taxon>Actinomycetota</taxon>
        <taxon>Actinomycetes</taxon>
        <taxon>Kitasatosporales</taxon>
        <taxon>Streptomycetaceae</taxon>
        <taxon>Streptomyces</taxon>
        <taxon>Streptomyces albidoflavus group</taxon>
    </lineage>
</organism>
<accession>Q9Z4W7</accession>
<sequence>MTTHAAEAPTTDPQGAPGSQKTPDATEAEEAARATVPHRAAAAALAREHDVVPLHQEFLDDSVSPVTAFAQLCGPDEAGFLLESVPVSGGVARYSYVGHRPVPLEPTGGDPLTALRSHLARSVAPVPGLPPFHGGVVGYLGYEAARHFEDLPLAAGPPPGLPESAFLAADDLVVFDHATRRVLLMTLYRPARESYDDAVARIVRLNRALRRAPAPAAFSGRPLAAATPADHGTQGWTANLTEAQFTERVARAREHIAAGDAFQIVLSRRLSRPLRARPTDLYRHLRATNPSPYMYHLSLGGGRHVIGASPELLVKAEGRTVRTRPLAGTRPRHPDPAEDLRLERELRADEKERAEHVMLVDLGRNDLGRVTEPGTVRVERLMRVERFSHVMHLSSTVRGRLAEGRDALDALRSAFPAGTLSGAPKIRAMEIIAELEPEQRGVYGGALGFVGADGLTDFAIALRTMVVADGHVHVQAGAGIVADSDPAAEFRETLHKSRAMLTAVRRAEAAA</sequence>
<dbReference type="EC" id="4.1.3.27"/>
<dbReference type="EMBL" id="AL939115">
    <property type="protein sequence ID" value="CAB38585.1"/>
    <property type="molecule type" value="Genomic_DNA"/>
</dbReference>
<dbReference type="PIR" id="T36306">
    <property type="entry name" value="T36306"/>
</dbReference>
<dbReference type="RefSeq" id="NP_627428.1">
    <property type="nucleotide sequence ID" value="NC_003888.3"/>
</dbReference>
<dbReference type="RefSeq" id="WP_011028832.1">
    <property type="nucleotide sequence ID" value="NZ_VNID01000013.1"/>
</dbReference>
<dbReference type="SMR" id="Q9Z4W7"/>
<dbReference type="STRING" id="100226.gene:17760832"/>
<dbReference type="PaxDb" id="100226-SCO3214"/>
<dbReference type="KEGG" id="sco:SCO3214"/>
<dbReference type="PATRIC" id="fig|100226.15.peg.3274"/>
<dbReference type="eggNOG" id="COG0147">
    <property type="taxonomic scope" value="Bacteria"/>
</dbReference>
<dbReference type="HOGENOM" id="CLU_006493_9_3_11"/>
<dbReference type="InParanoid" id="Q9Z4W7"/>
<dbReference type="OrthoDB" id="3518032at2"/>
<dbReference type="PhylomeDB" id="Q9Z4W7"/>
<dbReference type="UniPathway" id="UPA00035">
    <property type="reaction ID" value="UER00040"/>
</dbReference>
<dbReference type="Proteomes" id="UP000001973">
    <property type="component" value="Chromosome"/>
</dbReference>
<dbReference type="GO" id="GO:0004049">
    <property type="term" value="F:anthranilate synthase activity"/>
    <property type="evidence" value="ECO:0007669"/>
    <property type="project" value="UniProtKB-EC"/>
</dbReference>
<dbReference type="GO" id="GO:0046872">
    <property type="term" value="F:metal ion binding"/>
    <property type="evidence" value="ECO:0007669"/>
    <property type="project" value="UniProtKB-KW"/>
</dbReference>
<dbReference type="GO" id="GO:0000162">
    <property type="term" value="P:L-tryptophan biosynthetic process"/>
    <property type="evidence" value="ECO:0000318"/>
    <property type="project" value="GO_Central"/>
</dbReference>
<dbReference type="Gene3D" id="3.60.120.10">
    <property type="entry name" value="Anthranilate synthase"/>
    <property type="match status" value="1"/>
</dbReference>
<dbReference type="InterPro" id="IPR005801">
    <property type="entry name" value="ADC_synthase"/>
</dbReference>
<dbReference type="InterPro" id="IPR019999">
    <property type="entry name" value="Anth_synth_I-like"/>
</dbReference>
<dbReference type="InterPro" id="IPR006805">
    <property type="entry name" value="Anth_synth_I_N"/>
</dbReference>
<dbReference type="InterPro" id="IPR015890">
    <property type="entry name" value="Chorismate_C"/>
</dbReference>
<dbReference type="PANTHER" id="PTHR11236">
    <property type="entry name" value="AMINOBENZOATE/ANTHRANILATE SYNTHASE"/>
    <property type="match status" value="1"/>
</dbReference>
<dbReference type="PANTHER" id="PTHR11236:SF46">
    <property type="entry name" value="ANTHRANILATE SYNTHASE COMPONENT 1"/>
    <property type="match status" value="1"/>
</dbReference>
<dbReference type="Pfam" id="PF04715">
    <property type="entry name" value="Anth_synt_I_N"/>
    <property type="match status" value="1"/>
</dbReference>
<dbReference type="Pfam" id="PF00425">
    <property type="entry name" value="Chorismate_bind"/>
    <property type="match status" value="1"/>
</dbReference>
<dbReference type="PRINTS" id="PR00095">
    <property type="entry name" value="ANTSNTHASEI"/>
</dbReference>
<dbReference type="SUPFAM" id="SSF56322">
    <property type="entry name" value="ADC synthase"/>
    <property type="match status" value="1"/>
</dbReference>
<gene>
    <name type="primary">trpE</name>
    <name type="ordered locus">SCO3214</name>
    <name type="ORF">SCE8.07c</name>
</gene>
<proteinExistence type="inferred from homology"/>
<protein>
    <recommendedName>
        <fullName>Anthranilate synthase component 1</fullName>
        <shortName>AS</shortName>
        <shortName>ASI</shortName>
        <ecNumber>4.1.3.27</ecNumber>
    </recommendedName>
</protein>
<evidence type="ECO:0000250" key="1"/>
<evidence type="ECO:0000250" key="2">
    <source>
        <dbReference type="UniProtKB" id="P00897"/>
    </source>
</evidence>
<evidence type="ECO:0000256" key="3">
    <source>
        <dbReference type="SAM" id="MobiDB-lite"/>
    </source>
</evidence>
<evidence type="ECO:0000305" key="4"/>
<reference key="1">
    <citation type="journal article" date="2002" name="Nature">
        <title>Complete genome sequence of the model actinomycete Streptomyces coelicolor A3(2).</title>
        <authorList>
            <person name="Bentley S.D."/>
            <person name="Chater K.F."/>
            <person name="Cerdeno-Tarraga A.-M."/>
            <person name="Challis G.L."/>
            <person name="Thomson N.R."/>
            <person name="James K.D."/>
            <person name="Harris D.E."/>
            <person name="Quail M.A."/>
            <person name="Kieser H."/>
            <person name="Harper D."/>
            <person name="Bateman A."/>
            <person name="Brown S."/>
            <person name="Chandra G."/>
            <person name="Chen C.W."/>
            <person name="Collins M."/>
            <person name="Cronin A."/>
            <person name="Fraser A."/>
            <person name="Goble A."/>
            <person name="Hidalgo J."/>
            <person name="Hornsby T."/>
            <person name="Howarth S."/>
            <person name="Huang C.-H."/>
            <person name="Kieser T."/>
            <person name="Larke L."/>
            <person name="Murphy L.D."/>
            <person name="Oliver K."/>
            <person name="O'Neil S."/>
            <person name="Rabbinowitsch E."/>
            <person name="Rajandream M.A."/>
            <person name="Rutherford K.M."/>
            <person name="Rutter S."/>
            <person name="Seeger K."/>
            <person name="Saunders D."/>
            <person name="Sharp S."/>
            <person name="Squares R."/>
            <person name="Squares S."/>
            <person name="Taylor K."/>
            <person name="Warren T."/>
            <person name="Wietzorrek A."/>
            <person name="Woodward J.R."/>
            <person name="Barrell B.G."/>
            <person name="Parkhill J."/>
            <person name="Hopwood D.A."/>
        </authorList>
    </citation>
    <scope>NUCLEOTIDE SEQUENCE [LARGE SCALE GENOMIC DNA]</scope>
    <source>
        <strain>ATCC BAA-471 / A3(2) / M145</strain>
    </source>
</reference>
<feature type="chain" id="PRO_0000154113" description="Anthranilate synthase component 1">
    <location>
        <begin position="1"/>
        <end position="511"/>
    </location>
</feature>
<feature type="region of interest" description="Disordered" evidence="3">
    <location>
        <begin position="1"/>
        <end position="36"/>
    </location>
</feature>
<feature type="compositionally biased region" description="Polar residues" evidence="3">
    <location>
        <begin position="11"/>
        <end position="23"/>
    </location>
</feature>
<feature type="binding site" evidence="2">
    <location>
        <position position="84"/>
    </location>
    <ligand>
        <name>L-tryptophan</name>
        <dbReference type="ChEBI" id="CHEBI:57912"/>
    </ligand>
</feature>
<feature type="binding site" evidence="2">
    <location>
        <begin position="292"/>
        <end position="294"/>
    </location>
    <ligand>
        <name>L-tryptophan</name>
        <dbReference type="ChEBI" id="CHEBI:57912"/>
    </ligand>
</feature>
<feature type="binding site" evidence="2">
    <location>
        <begin position="328"/>
        <end position="329"/>
    </location>
    <ligand>
        <name>chorismate</name>
        <dbReference type="ChEBI" id="CHEBI:29748"/>
    </ligand>
</feature>
<feature type="binding site" evidence="2">
    <location>
        <position position="355"/>
    </location>
    <ligand>
        <name>Mg(2+)</name>
        <dbReference type="ChEBI" id="CHEBI:18420"/>
    </ligand>
</feature>
<feature type="binding site" evidence="2">
    <location>
        <position position="443"/>
    </location>
    <ligand>
        <name>chorismate</name>
        <dbReference type="ChEBI" id="CHEBI:29748"/>
    </ligand>
</feature>
<feature type="binding site" evidence="2">
    <location>
        <position position="463"/>
    </location>
    <ligand>
        <name>chorismate</name>
        <dbReference type="ChEBI" id="CHEBI:29748"/>
    </ligand>
</feature>
<feature type="binding site" evidence="2">
    <location>
        <begin position="477"/>
        <end position="479"/>
    </location>
    <ligand>
        <name>chorismate</name>
        <dbReference type="ChEBI" id="CHEBI:29748"/>
    </ligand>
</feature>
<feature type="binding site" evidence="2">
    <location>
        <position position="479"/>
    </location>
    <ligand>
        <name>chorismate</name>
        <dbReference type="ChEBI" id="CHEBI:29748"/>
    </ligand>
</feature>
<feature type="binding site" evidence="2">
    <location>
        <position position="492"/>
    </location>
    <ligand>
        <name>Mg(2+)</name>
        <dbReference type="ChEBI" id="CHEBI:18420"/>
    </ligand>
</feature>